<reference key="1">
    <citation type="submission" date="2004-12" db="EMBL/GenBank/DDBJ databases">
        <title>The genome sequence of Borrelia hermsii and Borrelia turicatae: comparative analysis of two agents of endemic N. America relapsing fever.</title>
        <authorList>
            <person name="Porcella S.F."/>
            <person name="Raffel S.J."/>
            <person name="Schrumpf M.E."/>
            <person name="Montgomery B."/>
            <person name="Smith T."/>
            <person name="Schwan T.G."/>
        </authorList>
    </citation>
    <scope>NUCLEOTIDE SEQUENCE [LARGE SCALE GENOMIC DNA]</scope>
    <source>
        <strain>HS1 / DAH</strain>
    </source>
</reference>
<evidence type="ECO:0000255" key="1">
    <source>
        <dbReference type="HAMAP-Rule" id="MF_00020"/>
    </source>
</evidence>
<proteinExistence type="inferred from homology"/>
<protein>
    <recommendedName>
        <fullName evidence="1">Acetate kinase</fullName>
        <ecNumber evidence="1">2.7.2.1</ecNumber>
    </recommendedName>
    <alternativeName>
        <fullName evidence="1">Acetokinase</fullName>
    </alternativeName>
</protein>
<dbReference type="EC" id="2.7.2.1" evidence="1"/>
<dbReference type="EMBL" id="CP000048">
    <property type="protein sequence ID" value="AAX17124.1"/>
    <property type="molecule type" value="Genomic_DNA"/>
</dbReference>
<dbReference type="RefSeq" id="WP_012422375.1">
    <property type="nucleotide sequence ID" value="NZ_CP073136.1"/>
</dbReference>
<dbReference type="SMR" id="B2S0W8"/>
<dbReference type="KEGG" id="bhr:BH0622"/>
<dbReference type="HOGENOM" id="CLU_020352_0_1_12"/>
<dbReference type="UniPathway" id="UPA00340">
    <property type="reaction ID" value="UER00458"/>
</dbReference>
<dbReference type="Proteomes" id="UP000008834">
    <property type="component" value="Chromosome"/>
</dbReference>
<dbReference type="GO" id="GO:0005737">
    <property type="term" value="C:cytoplasm"/>
    <property type="evidence" value="ECO:0007669"/>
    <property type="project" value="UniProtKB-SubCell"/>
</dbReference>
<dbReference type="GO" id="GO:0008776">
    <property type="term" value="F:acetate kinase activity"/>
    <property type="evidence" value="ECO:0007669"/>
    <property type="project" value="UniProtKB-UniRule"/>
</dbReference>
<dbReference type="GO" id="GO:0005524">
    <property type="term" value="F:ATP binding"/>
    <property type="evidence" value="ECO:0007669"/>
    <property type="project" value="UniProtKB-KW"/>
</dbReference>
<dbReference type="GO" id="GO:0000287">
    <property type="term" value="F:magnesium ion binding"/>
    <property type="evidence" value="ECO:0007669"/>
    <property type="project" value="UniProtKB-UniRule"/>
</dbReference>
<dbReference type="GO" id="GO:0006083">
    <property type="term" value="P:acetate metabolic process"/>
    <property type="evidence" value="ECO:0007669"/>
    <property type="project" value="TreeGrafter"/>
</dbReference>
<dbReference type="GO" id="GO:0006085">
    <property type="term" value="P:acetyl-CoA biosynthetic process"/>
    <property type="evidence" value="ECO:0007669"/>
    <property type="project" value="UniProtKB-UniRule"/>
</dbReference>
<dbReference type="CDD" id="cd24010">
    <property type="entry name" value="ASKHA_NBD_AcK_PK"/>
    <property type="match status" value="1"/>
</dbReference>
<dbReference type="Gene3D" id="3.30.420.40">
    <property type="match status" value="2"/>
</dbReference>
<dbReference type="HAMAP" id="MF_00020">
    <property type="entry name" value="Acetate_kinase"/>
    <property type="match status" value="1"/>
</dbReference>
<dbReference type="InterPro" id="IPR004372">
    <property type="entry name" value="Ac/propionate_kinase"/>
</dbReference>
<dbReference type="InterPro" id="IPR000890">
    <property type="entry name" value="Aliphatic_acid_kin_short-chain"/>
</dbReference>
<dbReference type="InterPro" id="IPR023865">
    <property type="entry name" value="Aliphatic_acid_kinase_CS"/>
</dbReference>
<dbReference type="InterPro" id="IPR043129">
    <property type="entry name" value="ATPase_NBD"/>
</dbReference>
<dbReference type="NCBIfam" id="TIGR00016">
    <property type="entry name" value="ackA"/>
    <property type="match status" value="1"/>
</dbReference>
<dbReference type="PANTHER" id="PTHR21060">
    <property type="entry name" value="ACETATE KINASE"/>
    <property type="match status" value="1"/>
</dbReference>
<dbReference type="PANTHER" id="PTHR21060:SF15">
    <property type="entry name" value="ACETATE KINASE-RELATED"/>
    <property type="match status" value="1"/>
</dbReference>
<dbReference type="Pfam" id="PF00871">
    <property type="entry name" value="Acetate_kinase"/>
    <property type="match status" value="1"/>
</dbReference>
<dbReference type="PIRSF" id="PIRSF000722">
    <property type="entry name" value="Acetate_prop_kin"/>
    <property type="match status" value="1"/>
</dbReference>
<dbReference type="PRINTS" id="PR00471">
    <property type="entry name" value="ACETATEKNASE"/>
</dbReference>
<dbReference type="SUPFAM" id="SSF53067">
    <property type="entry name" value="Actin-like ATPase domain"/>
    <property type="match status" value="2"/>
</dbReference>
<dbReference type="PROSITE" id="PS01075">
    <property type="entry name" value="ACETATE_KINASE_1"/>
    <property type="match status" value="1"/>
</dbReference>
<dbReference type="PROSITE" id="PS01076">
    <property type="entry name" value="ACETATE_KINASE_2"/>
    <property type="match status" value="1"/>
</dbReference>
<accession>B2S0W8</accession>
<comment type="function">
    <text evidence="1">Catalyzes the formation of acetyl phosphate from acetate and ATP. Can also catalyze the reverse reaction.</text>
</comment>
<comment type="catalytic activity">
    <reaction evidence="1">
        <text>acetate + ATP = acetyl phosphate + ADP</text>
        <dbReference type="Rhea" id="RHEA:11352"/>
        <dbReference type="ChEBI" id="CHEBI:22191"/>
        <dbReference type="ChEBI" id="CHEBI:30089"/>
        <dbReference type="ChEBI" id="CHEBI:30616"/>
        <dbReference type="ChEBI" id="CHEBI:456216"/>
        <dbReference type="EC" id="2.7.2.1"/>
    </reaction>
</comment>
<comment type="cofactor">
    <cofactor evidence="1">
        <name>Mg(2+)</name>
        <dbReference type="ChEBI" id="CHEBI:18420"/>
    </cofactor>
    <cofactor evidence="1">
        <name>Mn(2+)</name>
        <dbReference type="ChEBI" id="CHEBI:29035"/>
    </cofactor>
    <text evidence="1">Mg(2+). Can also accept Mn(2+).</text>
</comment>
<comment type="pathway">
    <text evidence="1">Metabolic intermediate biosynthesis; acetyl-CoA biosynthesis; acetyl-CoA from acetate: step 1/2.</text>
</comment>
<comment type="subunit">
    <text evidence="1">Homodimer.</text>
</comment>
<comment type="subcellular location">
    <subcellularLocation>
        <location evidence="1">Cytoplasm</location>
    </subcellularLocation>
</comment>
<comment type="similarity">
    <text evidence="1">Belongs to the acetokinase family.</text>
</comment>
<keyword id="KW-0067">ATP-binding</keyword>
<keyword id="KW-0963">Cytoplasm</keyword>
<keyword id="KW-0418">Kinase</keyword>
<keyword id="KW-0460">Magnesium</keyword>
<keyword id="KW-0479">Metal-binding</keyword>
<keyword id="KW-0547">Nucleotide-binding</keyword>
<keyword id="KW-0808">Transferase</keyword>
<name>ACKA_BORHD</name>
<gene>
    <name evidence="1" type="primary">ackA</name>
    <name type="ordered locus">BH0622</name>
</gene>
<sequence>MKILTLNTGSSSLKFTLYQHKNTQILASGTIEKIKTKKSIIRIKTQNDLLEKIDKHIKSHKEALKQLIKILTNKKLNIINNLNEIQGIGHRIVHGGPNFKNSVILNENILSELEKISALAPLHNPTAIKVIEITLKIFPNAKQVLCFDTSWHQTMNENAFLYATPYSWYKDYNIRKYGFHGLSYAYITKRVATILNKHKKDLNLIILHLGNGSSINAVKKGISYDTSMGLTPLEGLAMGTRSGDIDPAIIPLMSKVLNKTPRKIEEILNKESGMLGISLKSNDLRDIWEGVENNEYNSKLAVEIMAYRIKKYIGSYLAILEFNIDAIVFTAGIGVTDYGIRELSLKGFEKIGIEIDLQKNNLAREKNIESDISSEKSKTKILVIPTNEELTILEDTYNLITEHSRDLK</sequence>
<feature type="chain" id="PRO_1000089961" description="Acetate kinase">
    <location>
        <begin position="1"/>
        <end position="408"/>
    </location>
</feature>
<feature type="active site" description="Proton donor/acceptor" evidence="1">
    <location>
        <position position="148"/>
    </location>
</feature>
<feature type="binding site" evidence="1">
    <location>
        <position position="7"/>
    </location>
    <ligand>
        <name>Mg(2+)</name>
        <dbReference type="ChEBI" id="CHEBI:18420"/>
    </ligand>
</feature>
<feature type="binding site" evidence="1">
    <location>
        <position position="14"/>
    </location>
    <ligand>
        <name>ATP</name>
        <dbReference type="ChEBI" id="CHEBI:30616"/>
    </ligand>
</feature>
<feature type="binding site" evidence="1">
    <location>
        <position position="91"/>
    </location>
    <ligand>
        <name>substrate</name>
    </ligand>
</feature>
<feature type="binding site" evidence="1">
    <location>
        <begin position="208"/>
        <end position="212"/>
    </location>
    <ligand>
        <name>ATP</name>
        <dbReference type="ChEBI" id="CHEBI:30616"/>
    </ligand>
</feature>
<feature type="binding site" evidence="1">
    <location>
        <begin position="283"/>
        <end position="285"/>
    </location>
    <ligand>
        <name>ATP</name>
        <dbReference type="ChEBI" id="CHEBI:30616"/>
    </ligand>
</feature>
<feature type="binding site" evidence="1">
    <location>
        <position position="388"/>
    </location>
    <ligand>
        <name>Mg(2+)</name>
        <dbReference type="ChEBI" id="CHEBI:18420"/>
    </ligand>
</feature>
<feature type="site" description="Transition state stabilizer" evidence="1">
    <location>
        <position position="180"/>
    </location>
</feature>
<feature type="site" description="Transition state stabilizer" evidence="1">
    <location>
        <position position="241"/>
    </location>
</feature>
<organism>
    <name type="scientific">Borrelia hermsii (strain HS1 / DAH)</name>
    <dbReference type="NCBI Taxonomy" id="314723"/>
    <lineage>
        <taxon>Bacteria</taxon>
        <taxon>Pseudomonadati</taxon>
        <taxon>Spirochaetota</taxon>
        <taxon>Spirochaetia</taxon>
        <taxon>Spirochaetales</taxon>
        <taxon>Borreliaceae</taxon>
        <taxon>Borrelia</taxon>
    </lineage>
</organism>